<accession>Q8U8I2</accession>
<proteinExistence type="inferred from homology"/>
<reference key="1">
    <citation type="journal article" date="2001" name="Science">
        <title>The genome of the natural genetic engineer Agrobacterium tumefaciens C58.</title>
        <authorList>
            <person name="Wood D.W."/>
            <person name="Setubal J.C."/>
            <person name="Kaul R."/>
            <person name="Monks D.E."/>
            <person name="Kitajima J.P."/>
            <person name="Okura V.K."/>
            <person name="Zhou Y."/>
            <person name="Chen L."/>
            <person name="Wood G.E."/>
            <person name="Almeida N.F. Jr."/>
            <person name="Woo L."/>
            <person name="Chen Y."/>
            <person name="Paulsen I.T."/>
            <person name="Eisen J.A."/>
            <person name="Karp P.D."/>
            <person name="Bovee D. Sr."/>
            <person name="Chapman P."/>
            <person name="Clendenning J."/>
            <person name="Deatherage G."/>
            <person name="Gillet W."/>
            <person name="Grant C."/>
            <person name="Kutyavin T."/>
            <person name="Levy R."/>
            <person name="Li M.-J."/>
            <person name="McClelland E."/>
            <person name="Palmieri A."/>
            <person name="Raymond C."/>
            <person name="Rouse G."/>
            <person name="Saenphimmachak C."/>
            <person name="Wu Z."/>
            <person name="Romero P."/>
            <person name="Gordon D."/>
            <person name="Zhang S."/>
            <person name="Yoo H."/>
            <person name="Tao Y."/>
            <person name="Biddle P."/>
            <person name="Jung M."/>
            <person name="Krespan W."/>
            <person name="Perry M."/>
            <person name="Gordon-Kamm B."/>
            <person name="Liao L."/>
            <person name="Kim S."/>
            <person name="Hendrick C."/>
            <person name="Zhao Z.-Y."/>
            <person name="Dolan M."/>
            <person name="Chumley F."/>
            <person name="Tingey S.V."/>
            <person name="Tomb J.-F."/>
            <person name="Gordon M.P."/>
            <person name="Olson M.V."/>
            <person name="Nester E.W."/>
        </authorList>
    </citation>
    <scope>NUCLEOTIDE SEQUENCE [LARGE SCALE GENOMIC DNA]</scope>
    <source>
        <strain>C58 / ATCC 33970</strain>
    </source>
</reference>
<reference key="2">
    <citation type="journal article" date="2001" name="Science">
        <title>Genome sequence of the plant pathogen and biotechnology agent Agrobacterium tumefaciens C58.</title>
        <authorList>
            <person name="Goodner B."/>
            <person name="Hinkle G."/>
            <person name="Gattung S."/>
            <person name="Miller N."/>
            <person name="Blanchard M."/>
            <person name="Qurollo B."/>
            <person name="Goldman B.S."/>
            <person name="Cao Y."/>
            <person name="Askenazi M."/>
            <person name="Halling C."/>
            <person name="Mullin L."/>
            <person name="Houmiel K."/>
            <person name="Gordon J."/>
            <person name="Vaudin M."/>
            <person name="Iartchouk O."/>
            <person name="Epp A."/>
            <person name="Liu F."/>
            <person name="Wollam C."/>
            <person name="Allinger M."/>
            <person name="Doughty D."/>
            <person name="Scott C."/>
            <person name="Lappas C."/>
            <person name="Markelz B."/>
            <person name="Flanagan C."/>
            <person name="Crowell C."/>
            <person name="Gurson J."/>
            <person name="Lomo C."/>
            <person name="Sear C."/>
            <person name="Strub G."/>
            <person name="Cielo C."/>
            <person name="Slater S."/>
        </authorList>
    </citation>
    <scope>NUCLEOTIDE SEQUENCE [LARGE SCALE GENOMIC DNA]</scope>
    <source>
        <strain>C58 / ATCC 33970</strain>
    </source>
</reference>
<dbReference type="EC" id="1.1.1.276"/>
<dbReference type="EMBL" id="AE007870">
    <property type="protein sequence ID" value="AAK89321.1"/>
    <property type="molecule type" value="Genomic_DNA"/>
</dbReference>
<dbReference type="PIR" id="AH3061">
    <property type="entry name" value="AH3061"/>
</dbReference>
<dbReference type="PIR" id="G98224">
    <property type="entry name" value="G98224"/>
</dbReference>
<dbReference type="RefSeq" id="NP_356536.1">
    <property type="nucleotide sequence ID" value="NC_003063.2"/>
</dbReference>
<dbReference type="RefSeq" id="WP_010973571.1">
    <property type="nucleotide sequence ID" value="NC_003063.2"/>
</dbReference>
<dbReference type="SMR" id="Q8U8I2"/>
<dbReference type="STRING" id="176299.Atu4110"/>
<dbReference type="EnsemblBacteria" id="AAK89321">
    <property type="protein sequence ID" value="AAK89321"/>
    <property type="gene ID" value="Atu4110"/>
</dbReference>
<dbReference type="GeneID" id="1135984"/>
<dbReference type="KEGG" id="atu:Atu4110"/>
<dbReference type="PATRIC" id="fig|176299.10.peg.3928"/>
<dbReference type="eggNOG" id="COG4221">
    <property type="taxonomic scope" value="Bacteria"/>
</dbReference>
<dbReference type="HOGENOM" id="CLU_010194_2_10_5"/>
<dbReference type="OrthoDB" id="658698at2"/>
<dbReference type="PhylomeDB" id="Q8U8I2"/>
<dbReference type="BioCyc" id="AGRO:ATU4110-MONOMER"/>
<dbReference type="Proteomes" id="UP000000813">
    <property type="component" value="Chromosome linear"/>
</dbReference>
<dbReference type="GO" id="GO:0031132">
    <property type="term" value="F:serine 3-dehydrogenase activity"/>
    <property type="evidence" value="ECO:0007669"/>
    <property type="project" value="UniProtKB-EC"/>
</dbReference>
<dbReference type="CDD" id="cd05346">
    <property type="entry name" value="SDR_c5"/>
    <property type="match status" value="1"/>
</dbReference>
<dbReference type="FunFam" id="3.40.50.720:FF:000047">
    <property type="entry name" value="NADP-dependent L-serine/L-allo-threonine dehydrogenase"/>
    <property type="match status" value="1"/>
</dbReference>
<dbReference type="Gene3D" id="3.40.50.720">
    <property type="entry name" value="NAD(P)-binding Rossmann-like Domain"/>
    <property type="match status" value="1"/>
</dbReference>
<dbReference type="InterPro" id="IPR036291">
    <property type="entry name" value="NAD(P)-bd_dom_sf"/>
</dbReference>
<dbReference type="InterPro" id="IPR020904">
    <property type="entry name" value="Sc_DH/Rdtase_CS"/>
</dbReference>
<dbReference type="InterPro" id="IPR002347">
    <property type="entry name" value="SDR_fam"/>
</dbReference>
<dbReference type="PANTHER" id="PTHR42901">
    <property type="entry name" value="ALCOHOL DEHYDROGENASE"/>
    <property type="match status" value="1"/>
</dbReference>
<dbReference type="PANTHER" id="PTHR42901:SF1">
    <property type="entry name" value="ALCOHOL DEHYDROGENASE"/>
    <property type="match status" value="1"/>
</dbReference>
<dbReference type="Pfam" id="PF00106">
    <property type="entry name" value="adh_short"/>
    <property type="match status" value="1"/>
</dbReference>
<dbReference type="PRINTS" id="PR00081">
    <property type="entry name" value="GDHRDH"/>
</dbReference>
<dbReference type="PRINTS" id="PR00080">
    <property type="entry name" value="SDRFAMILY"/>
</dbReference>
<dbReference type="SMART" id="SM00822">
    <property type="entry name" value="PKS_KR"/>
    <property type="match status" value="1"/>
</dbReference>
<dbReference type="SUPFAM" id="SSF51735">
    <property type="entry name" value="NAD(P)-binding Rossmann-fold domains"/>
    <property type="match status" value="1"/>
</dbReference>
<dbReference type="PROSITE" id="PS00061">
    <property type="entry name" value="ADH_SHORT"/>
    <property type="match status" value="1"/>
</dbReference>
<organism>
    <name type="scientific">Agrobacterium fabrum (strain C58 / ATCC 33970)</name>
    <name type="common">Agrobacterium tumefaciens (strain C58)</name>
    <dbReference type="NCBI Taxonomy" id="176299"/>
    <lineage>
        <taxon>Bacteria</taxon>
        <taxon>Pseudomonadati</taxon>
        <taxon>Pseudomonadota</taxon>
        <taxon>Alphaproteobacteria</taxon>
        <taxon>Hyphomicrobiales</taxon>
        <taxon>Rhizobiaceae</taxon>
        <taxon>Rhizobium/Agrobacterium group</taxon>
        <taxon>Agrobacterium</taxon>
        <taxon>Agrobacterium tumefaciens complex</taxon>
    </lineage>
</organism>
<gene>
    <name type="primary">sdh</name>
    <name type="ordered locus">Atu4110</name>
    <name type="ORF">AGR_L_1487</name>
</gene>
<name>SDH_AGRFC</name>
<sequence>MSGTILITGATSGFGQATARRFVKEGWKVIGTGRRAERLEALAAELGQAFHGIAFDITDEDATEKALAALPDGFRDIDILVNNAGLALGTAPAPQVALKDWQTMVDTNITGLLNITHHLLPTLIKQKGIVVNLSSVAAHYPYLGGNVYGGTKAFLRQFSLGLRSDLHGKGVRVTSIEPGMCETEFTLVRTGGNQEASDNLYKGVNPITADDIANTIYWVASQPKHININSLELMPVNQSFAGFQVYRES</sequence>
<evidence type="ECO:0000250" key="1"/>
<evidence type="ECO:0000250" key="2">
    <source>
        <dbReference type="UniProtKB" id="Q9KWN1"/>
    </source>
</evidence>
<evidence type="ECO:0000255" key="3">
    <source>
        <dbReference type="PROSITE-ProRule" id="PRU10001"/>
    </source>
</evidence>
<evidence type="ECO:0000305" key="4"/>
<keyword id="KW-0521">NADP</keyword>
<keyword id="KW-0560">Oxidoreductase</keyword>
<keyword id="KW-1185">Reference proteome</keyword>
<protein>
    <recommendedName>
        <fullName>Serine 3-dehydrogenase</fullName>
        <ecNumber>1.1.1.276</ecNumber>
    </recommendedName>
</protein>
<comment type="function">
    <text evidence="2">Catalyzes the oxidation of the hydroxyl group of serine to form 2-aminomalonate semialdehyde which is spontaneously converted into 2-aminoacetaldehyde and CO(2). Also acts on D-serine, L-glycerate, D-glycerate and 2-methyl-DL-serine. Does not act on O-methyl-DL-serine and L-threonine.</text>
</comment>
<comment type="catalytic activity">
    <reaction evidence="2">
        <text>L-serine + NADP(+) = aminoacetaldehyde + CO2 + NADPH</text>
        <dbReference type="Rhea" id="RHEA:43620"/>
        <dbReference type="ChEBI" id="CHEBI:16526"/>
        <dbReference type="ChEBI" id="CHEBI:33384"/>
        <dbReference type="ChEBI" id="CHEBI:57783"/>
        <dbReference type="ChEBI" id="CHEBI:58213"/>
        <dbReference type="ChEBI" id="CHEBI:58349"/>
        <dbReference type="EC" id="1.1.1.276"/>
    </reaction>
</comment>
<comment type="subunit">
    <text evidence="2">Homotetramer.</text>
</comment>
<comment type="similarity">
    <text evidence="4">Belongs to the short-chain dehydrogenases/reductases (SDR) family.</text>
</comment>
<feature type="chain" id="PRO_0000054772" description="Serine 3-dehydrogenase">
    <location>
        <begin position="1"/>
        <end position="249"/>
    </location>
</feature>
<feature type="active site" description="Proton acceptor" evidence="3">
    <location>
        <position position="148"/>
    </location>
</feature>
<feature type="binding site" evidence="1">
    <location>
        <begin position="6"/>
        <end position="30"/>
    </location>
    <ligand>
        <name>NADP(+)</name>
        <dbReference type="ChEBI" id="CHEBI:58349"/>
    </ligand>
</feature>
<feature type="binding site" evidence="1">
    <location>
        <position position="135"/>
    </location>
    <ligand>
        <name>substrate</name>
    </ligand>
</feature>